<proteinExistence type="inferred from homology"/>
<keyword id="KW-1185">Reference proteome</keyword>
<keyword id="KW-0687">Ribonucleoprotein</keyword>
<keyword id="KW-0689">Ribosomal protein</keyword>
<feature type="chain" id="PRO_0000126157" description="Large ribosomal subunit protein bL36">
    <location>
        <begin position="1"/>
        <end position="37"/>
    </location>
</feature>
<gene>
    <name evidence="1" type="primary">rpmJ</name>
    <name type="ordered locus">BP3638</name>
</gene>
<organism>
    <name type="scientific">Bordetella pertussis (strain Tohama I / ATCC BAA-589 / NCTC 13251)</name>
    <dbReference type="NCBI Taxonomy" id="257313"/>
    <lineage>
        <taxon>Bacteria</taxon>
        <taxon>Pseudomonadati</taxon>
        <taxon>Pseudomonadota</taxon>
        <taxon>Betaproteobacteria</taxon>
        <taxon>Burkholderiales</taxon>
        <taxon>Alcaligenaceae</taxon>
        <taxon>Bordetella</taxon>
    </lineage>
</organism>
<protein>
    <recommendedName>
        <fullName evidence="1">Large ribosomal subunit protein bL36</fullName>
    </recommendedName>
    <alternativeName>
        <fullName evidence="2">50S ribosomal protein L36</fullName>
    </alternativeName>
</protein>
<name>RL36_BORPE</name>
<accession>Q7VTA9</accession>
<evidence type="ECO:0000255" key="1">
    <source>
        <dbReference type="HAMAP-Rule" id="MF_00251"/>
    </source>
</evidence>
<evidence type="ECO:0000305" key="2"/>
<dbReference type="EMBL" id="BX640422">
    <property type="protein sequence ID" value="CAE43895.1"/>
    <property type="molecule type" value="Genomic_DNA"/>
</dbReference>
<dbReference type="RefSeq" id="NP_882147.1">
    <property type="nucleotide sequence ID" value="NC_002929.2"/>
</dbReference>
<dbReference type="RefSeq" id="WP_003806928.1">
    <property type="nucleotide sequence ID" value="NZ_CP039022.1"/>
</dbReference>
<dbReference type="SMR" id="Q7VTA9"/>
<dbReference type="STRING" id="257313.BP3638"/>
<dbReference type="PaxDb" id="257313-BP3638"/>
<dbReference type="GeneID" id="94357819"/>
<dbReference type="KEGG" id="bpe:BP3638"/>
<dbReference type="PATRIC" id="fig|257313.5.peg.3935"/>
<dbReference type="eggNOG" id="COG0257">
    <property type="taxonomic scope" value="Bacteria"/>
</dbReference>
<dbReference type="HOGENOM" id="CLU_135723_6_2_4"/>
<dbReference type="PRO" id="PR:Q7VTA9"/>
<dbReference type="Proteomes" id="UP000002676">
    <property type="component" value="Chromosome"/>
</dbReference>
<dbReference type="GO" id="GO:0005737">
    <property type="term" value="C:cytoplasm"/>
    <property type="evidence" value="ECO:0007669"/>
    <property type="project" value="UniProtKB-ARBA"/>
</dbReference>
<dbReference type="GO" id="GO:1990904">
    <property type="term" value="C:ribonucleoprotein complex"/>
    <property type="evidence" value="ECO:0007669"/>
    <property type="project" value="UniProtKB-KW"/>
</dbReference>
<dbReference type="GO" id="GO:0005840">
    <property type="term" value="C:ribosome"/>
    <property type="evidence" value="ECO:0007669"/>
    <property type="project" value="UniProtKB-KW"/>
</dbReference>
<dbReference type="GO" id="GO:0003735">
    <property type="term" value="F:structural constituent of ribosome"/>
    <property type="evidence" value="ECO:0007669"/>
    <property type="project" value="InterPro"/>
</dbReference>
<dbReference type="GO" id="GO:0006412">
    <property type="term" value="P:translation"/>
    <property type="evidence" value="ECO:0007669"/>
    <property type="project" value="UniProtKB-UniRule"/>
</dbReference>
<dbReference type="HAMAP" id="MF_00251">
    <property type="entry name" value="Ribosomal_bL36"/>
    <property type="match status" value="1"/>
</dbReference>
<dbReference type="InterPro" id="IPR000473">
    <property type="entry name" value="Ribosomal_bL36"/>
</dbReference>
<dbReference type="InterPro" id="IPR035977">
    <property type="entry name" value="Ribosomal_bL36_sp"/>
</dbReference>
<dbReference type="NCBIfam" id="TIGR01022">
    <property type="entry name" value="rpmJ_bact"/>
    <property type="match status" value="1"/>
</dbReference>
<dbReference type="PANTHER" id="PTHR42888">
    <property type="entry name" value="50S RIBOSOMAL PROTEIN L36, CHLOROPLASTIC"/>
    <property type="match status" value="1"/>
</dbReference>
<dbReference type="PANTHER" id="PTHR42888:SF1">
    <property type="entry name" value="LARGE RIBOSOMAL SUBUNIT PROTEIN BL36C"/>
    <property type="match status" value="1"/>
</dbReference>
<dbReference type="Pfam" id="PF00444">
    <property type="entry name" value="Ribosomal_L36"/>
    <property type="match status" value="1"/>
</dbReference>
<dbReference type="SUPFAM" id="SSF57840">
    <property type="entry name" value="Ribosomal protein L36"/>
    <property type="match status" value="1"/>
</dbReference>
<dbReference type="PROSITE" id="PS00828">
    <property type="entry name" value="RIBOSOMAL_L36"/>
    <property type="match status" value="1"/>
</dbReference>
<sequence length="37" mass="4332">MKVMASVKRICRNCKVIKRHGVVRVICTDPRHKQRQG</sequence>
<comment type="similarity">
    <text evidence="1">Belongs to the bacterial ribosomal protein bL36 family.</text>
</comment>
<reference key="1">
    <citation type="journal article" date="2003" name="Nat. Genet.">
        <title>Comparative analysis of the genome sequences of Bordetella pertussis, Bordetella parapertussis and Bordetella bronchiseptica.</title>
        <authorList>
            <person name="Parkhill J."/>
            <person name="Sebaihia M."/>
            <person name="Preston A."/>
            <person name="Murphy L.D."/>
            <person name="Thomson N.R."/>
            <person name="Harris D.E."/>
            <person name="Holden M.T.G."/>
            <person name="Churcher C.M."/>
            <person name="Bentley S.D."/>
            <person name="Mungall K.L."/>
            <person name="Cerdeno-Tarraga A.-M."/>
            <person name="Temple L."/>
            <person name="James K.D."/>
            <person name="Harris B."/>
            <person name="Quail M.A."/>
            <person name="Achtman M."/>
            <person name="Atkin R."/>
            <person name="Baker S."/>
            <person name="Basham D."/>
            <person name="Bason N."/>
            <person name="Cherevach I."/>
            <person name="Chillingworth T."/>
            <person name="Collins M."/>
            <person name="Cronin A."/>
            <person name="Davis P."/>
            <person name="Doggett J."/>
            <person name="Feltwell T."/>
            <person name="Goble A."/>
            <person name="Hamlin N."/>
            <person name="Hauser H."/>
            <person name="Holroyd S."/>
            <person name="Jagels K."/>
            <person name="Leather S."/>
            <person name="Moule S."/>
            <person name="Norberczak H."/>
            <person name="O'Neil S."/>
            <person name="Ormond D."/>
            <person name="Price C."/>
            <person name="Rabbinowitsch E."/>
            <person name="Rutter S."/>
            <person name="Sanders M."/>
            <person name="Saunders D."/>
            <person name="Seeger K."/>
            <person name="Sharp S."/>
            <person name="Simmonds M."/>
            <person name="Skelton J."/>
            <person name="Squares R."/>
            <person name="Squares S."/>
            <person name="Stevens K."/>
            <person name="Unwin L."/>
            <person name="Whitehead S."/>
            <person name="Barrell B.G."/>
            <person name="Maskell D.J."/>
        </authorList>
    </citation>
    <scope>NUCLEOTIDE SEQUENCE [LARGE SCALE GENOMIC DNA]</scope>
    <source>
        <strain>Tohama I / ATCC BAA-589 / NCTC 13251</strain>
    </source>
</reference>